<feature type="signal peptide" evidence="2">
    <location>
        <begin position="1"/>
        <end position="20"/>
    </location>
</feature>
<feature type="chain" id="PRO_0000281655" description="Phosphate-binding protein PstS">
    <location>
        <begin position="21"/>
        <end position="327"/>
    </location>
</feature>
<feature type="region of interest" description="Disordered" evidence="3">
    <location>
        <begin position="307"/>
        <end position="327"/>
    </location>
</feature>
<feature type="lipid moiety-binding region" description="N-palmitoyl cysteine" evidence="2">
    <location>
        <position position="21"/>
    </location>
</feature>
<feature type="lipid moiety-binding region" description="S-diacylglycerol cysteine" evidence="2">
    <location>
        <position position="21"/>
    </location>
</feature>
<protein>
    <recommendedName>
        <fullName>Phosphate-binding protein PstS</fullName>
        <shortName>PBP</shortName>
    </recommendedName>
</protein>
<organism>
    <name type="scientific">Staphylococcus aureus (strain bovine RF122 / ET3-1)</name>
    <dbReference type="NCBI Taxonomy" id="273036"/>
    <lineage>
        <taxon>Bacteria</taxon>
        <taxon>Bacillati</taxon>
        <taxon>Bacillota</taxon>
        <taxon>Bacilli</taxon>
        <taxon>Bacillales</taxon>
        <taxon>Staphylococcaceae</taxon>
        <taxon>Staphylococcus</taxon>
    </lineage>
</organism>
<accession>Q2YXX9</accession>
<name>PSTS_STAAB</name>
<gene>
    <name type="primary">pstS</name>
    <name type="ordered locus">SAB1245c</name>
</gene>
<proteinExistence type="inferred from homology"/>
<dbReference type="EMBL" id="AJ938182">
    <property type="protein sequence ID" value="CAI80934.1"/>
    <property type="molecule type" value="Genomic_DNA"/>
</dbReference>
<dbReference type="RefSeq" id="WP_000759230.1">
    <property type="nucleotide sequence ID" value="NC_007622.1"/>
</dbReference>
<dbReference type="SMR" id="Q2YXX9"/>
<dbReference type="KEGG" id="sab:SAB1245c"/>
<dbReference type="HOGENOM" id="CLU_026228_1_1_9"/>
<dbReference type="GO" id="GO:0005886">
    <property type="term" value="C:plasma membrane"/>
    <property type="evidence" value="ECO:0007669"/>
    <property type="project" value="UniProtKB-SubCell"/>
</dbReference>
<dbReference type="GO" id="GO:0042301">
    <property type="term" value="F:phosphate ion binding"/>
    <property type="evidence" value="ECO:0007669"/>
    <property type="project" value="InterPro"/>
</dbReference>
<dbReference type="GO" id="GO:0006817">
    <property type="term" value="P:phosphate ion transport"/>
    <property type="evidence" value="ECO:0007669"/>
    <property type="project" value="UniProtKB-KW"/>
</dbReference>
<dbReference type="CDD" id="cd13654">
    <property type="entry name" value="PBP2_phosphate_like_2"/>
    <property type="match status" value="1"/>
</dbReference>
<dbReference type="Gene3D" id="3.40.190.10">
    <property type="entry name" value="Periplasmic binding protein-like II"/>
    <property type="match status" value="2"/>
</dbReference>
<dbReference type="InterPro" id="IPR024370">
    <property type="entry name" value="PBP_domain"/>
</dbReference>
<dbReference type="InterPro" id="IPR011862">
    <property type="entry name" value="Phos-bd"/>
</dbReference>
<dbReference type="InterPro" id="IPR050811">
    <property type="entry name" value="Phosphate_ABC_transporter"/>
</dbReference>
<dbReference type="NCBIfam" id="TIGR02136">
    <property type="entry name" value="ptsS_2"/>
    <property type="match status" value="1"/>
</dbReference>
<dbReference type="PANTHER" id="PTHR30570">
    <property type="entry name" value="PERIPLASMIC PHOSPHATE BINDING COMPONENT OF PHOSPHATE ABC TRANSPORTER"/>
    <property type="match status" value="1"/>
</dbReference>
<dbReference type="PANTHER" id="PTHR30570:SF1">
    <property type="entry name" value="PHOSPHATE-BINDING PROTEIN PSTS"/>
    <property type="match status" value="1"/>
</dbReference>
<dbReference type="Pfam" id="PF12849">
    <property type="entry name" value="PBP_like_2"/>
    <property type="match status" value="1"/>
</dbReference>
<dbReference type="SUPFAM" id="SSF53850">
    <property type="entry name" value="Periplasmic binding protein-like II"/>
    <property type="match status" value="1"/>
</dbReference>
<dbReference type="PROSITE" id="PS51257">
    <property type="entry name" value="PROKAR_LIPOPROTEIN"/>
    <property type="match status" value="1"/>
</dbReference>
<keyword id="KW-1003">Cell membrane</keyword>
<keyword id="KW-0449">Lipoprotein</keyword>
<keyword id="KW-0472">Membrane</keyword>
<keyword id="KW-0564">Palmitate</keyword>
<keyword id="KW-0592">Phosphate transport</keyword>
<keyword id="KW-0732">Signal</keyword>
<keyword id="KW-0813">Transport</keyword>
<reference key="1">
    <citation type="journal article" date="2007" name="PLoS ONE">
        <title>Molecular correlates of host specialization in Staphylococcus aureus.</title>
        <authorList>
            <person name="Herron-Olson L."/>
            <person name="Fitzgerald J.R."/>
            <person name="Musser J.M."/>
            <person name="Kapur V."/>
        </authorList>
    </citation>
    <scope>NUCLEOTIDE SEQUENCE [LARGE SCALE GENOMIC DNA]</scope>
    <source>
        <strain>bovine RF122 / ET3-1</strain>
    </source>
</reference>
<sequence length="327" mass="36164">MKKWQFVGTTALGATLLLGACGGGNGGSGNSDLKGEAKGDGSSTVAPIVEKLNEKWAQDHSDAKISAGQAGTGAGFQKFIAGDIDFADASRPIKDEEKQKLQDKNIKYKEFKIAQDGVTVAVNKENDFVDELDKQQLKAIYSGKAKTWKDVNSKWPDKKINAVSPNSSHGTYDFFENEVMNKEDIKAEKNADTNAIVSSVTKNKEGIGYFGYNFYVQNKDKLKEVKIKDENCKATEPTKKTIQDNSYALSRPLFIYVNEKALKDNKVMSEFIKFVLEDKGKAAEEAGYVAAPEKTYKSQLDDLKAFIDKNQKSDDKKSDDKKSEDKK</sequence>
<comment type="function">
    <text evidence="1">Part of the ABC transporter complex PstSACB involved in phosphate import.</text>
</comment>
<comment type="subunit">
    <text evidence="4">The complex is composed of two ATP-binding proteins (PstB), two transmembrane proteins (PstC and PstA) and a solute-binding protein (PstS).</text>
</comment>
<comment type="subcellular location">
    <subcellularLocation>
        <location evidence="4">Cell membrane</location>
        <topology evidence="4">Lipid-anchor</topology>
    </subcellularLocation>
</comment>
<comment type="similarity">
    <text evidence="4">Belongs to the PstS family.</text>
</comment>
<evidence type="ECO:0000250" key="1"/>
<evidence type="ECO:0000255" key="2">
    <source>
        <dbReference type="PROSITE-ProRule" id="PRU00303"/>
    </source>
</evidence>
<evidence type="ECO:0000256" key="3">
    <source>
        <dbReference type="SAM" id="MobiDB-lite"/>
    </source>
</evidence>
<evidence type="ECO:0000305" key="4"/>